<dbReference type="EC" id="4.2.3.163" evidence="2"/>
<dbReference type="EC" id="4.2.3.171" evidence="2"/>
<dbReference type="EMBL" id="GL698514">
    <property type="protein sequence ID" value="EFY88241.1"/>
    <property type="molecule type" value="Genomic_DNA"/>
</dbReference>
<dbReference type="RefSeq" id="XP_007812054.1">
    <property type="nucleotide sequence ID" value="XM_007813863.1"/>
</dbReference>
<dbReference type="SMR" id="E9E766"/>
<dbReference type="GeneID" id="19250025"/>
<dbReference type="KEGG" id="maw:19250025"/>
<dbReference type="eggNOG" id="ENOG502RKSS">
    <property type="taxonomic scope" value="Eukaryota"/>
</dbReference>
<dbReference type="HOGENOM" id="CLU_042538_4_2_1"/>
<dbReference type="InParanoid" id="E9E766"/>
<dbReference type="OMA" id="DLIEYAM"/>
<dbReference type="OrthoDB" id="2861623at2759"/>
<dbReference type="Proteomes" id="UP000002499">
    <property type="component" value="Unassembled WGS sequence"/>
</dbReference>
<dbReference type="GO" id="GO:0046872">
    <property type="term" value="F:metal ion binding"/>
    <property type="evidence" value="ECO:0007669"/>
    <property type="project" value="UniProtKB-KW"/>
</dbReference>
<dbReference type="GO" id="GO:0010333">
    <property type="term" value="F:terpene synthase activity"/>
    <property type="evidence" value="ECO:0007669"/>
    <property type="project" value="InterPro"/>
</dbReference>
<dbReference type="GO" id="GO:0008299">
    <property type="term" value="P:isoprenoid biosynthetic process"/>
    <property type="evidence" value="ECO:0007669"/>
    <property type="project" value="UniProtKB-ARBA"/>
</dbReference>
<dbReference type="Gene3D" id="1.10.600.10">
    <property type="entry name" value="Farnesyl Diphosphate Synthase"/>
    <property type="match status" value="1"/>
</dbReference>
<dbReference type="InterPro" id="IPR008949">
    <property type="entry name" value="Isoprenoid_synthase_dom_sf"/>
</dbReference>
<dbReference type="InterPro" id="IPR034686">
    <property type="entry name" value="Terpene_cyclase-like_2"/>
</dbReference>
<dbReference type="PANTHER" id="PTHR35201:SF4">
    <property type="entry name" value="BETA-PINACENE SYNTHASE-RELATED"/>
    <property type="match status" value="1"/>
</dbReference>
<dbReference type="PANTHER" id="PTHR35201">
    <property type="entry name" value="TERPENE SYNTHASE"/>
    <property type="match status" value="1"/>
</dbReference>
<dbReference type="Pfam" id="PF19086">
    <property type="entry name" value="Terpene_syn_C_2"/>
    <property type="match status" value="1"/>
</dbReference>
<dbReference type="SFLD" id="SFLDS00005">
    <property type="entry name" value="Isoprenoid_Synthase_Type_I"/>
    <property type="match status" value="1"/>
</dbReference>
<dbReference type="SFLD" id="SFLDG01020">
    <property type="entry name" value="Terpene_Cyclase_Like_2"/>
    <property type="match status" value="1"/>
</dbReference>
<dbReference type="SUPFAM" id="SSF48576">
    <property type="entry name" value="Terpenoid synthases"/>
    <property type="match status" value="1"/>
</dbReference>
<reference key="1">
    <citation type="journal article" date="2011" name="PLoS Genet.">
        <title>Genome sequencing and comparative transcriptomics of the model entomopathogenic fungi Metarhizium anisopliae and M. acridum.</title>
        <authorList>
            <person name="Gao Q."/>
            <person name="Jin K."/>
            <person name="Ying S.-H."/>
            <person name="Zhang Y."/>
            <person name="Xiao G."/>
            <person name="Shang Y."/>
            <person name="Duan Z."/>
            <person name="Hu X."/>
            <person name="Xie X.-Q."/>
            <person name="Zhou G."/>
            <person name="Peng G."/>
            <person name="Luo Z."/>
            <person name="Huang W."/>
            <person name="Wang B."/>
            <person name="Fang W."/>
            <person name="Wang S."/>
            <person name="Zhong Y."/>
            <person name="Ma L.-J."/>
            <person name="St Leger R.J."/>
            <person name="Zhao G.-P."/>
            <person name="Pei Y."/>
            <person name="Feng M.-G."/>
            <person name="Xia Y."/>
            <person name="Wang C."/>
        </authorList>
    </citation>
    <scope>NUCLEOTIDE SEQUENCE [LARGE SCALE GENOMIC DNA]</scope>
    <source>
        <strain>CQMa 102</strain>
    </source>
</reference>
<reference key="2">
    <citation type="journal article" date="2019" name="Sci. Rep.">
        <title>Terpene synthase genes originated from bacteria through horizontal gene transfer contribute to terpenoid diversity in fungi.</title>
        <authorList>
            <person name="Jia Q."/>
            <person name="Chen X."/>
            <person name="Koellner T.G."/>
            <person name="Rinkel J."/>
            <person name="Fu J."/>
            <person name="Labbe J."/>
            <person name="Xiong W."/>
            <person name="Dickschat J.S."/>
            <person name="Gershenzon J."/>
            <person name="Chen F."/>
        </authorList>
    </citation>
    <scope>FUNCTION</scope>
    <scope>CATALYTIC ACTIVITY</scope>
</reference>
<evidence type="ECO:0000250" key="1">
    <source>
        <dbReference type="UniProtKB" id="B5HDJ6"/>
    </source>
</evidence>
<evidence type="ECO:0000269" key="2">
    <source>
    </source>
</evidence>
<evidence type="ECO:0000303" key="3">
    <source>
    </source>
</evidence>
<evidence type="ECO:0000305" key="4"/>
<name>BTPSL_METAQ</name>
<sequence>MEKQHLKSQIAALRVPTFNIAWPERRSPKADVVEERMMKWADHHKLLVNGEYRDRVIRTRYGLLAARCYPNAGEELLQAIADYFVWFFLADDLFVDRVEVVTDETIRNLTAMIDVLDRNVAREEPVFGELAWLDVCQRLRDLLQPEAFQRFAQGMRLWATTAALQILNHQRPKSVGIREYEAIRRHTSGLNPCTSLADAANKGSVQAHEFYQPDVQKLVLQTNNIVCWANDIQSLGMEIQQPGQFRNMVTIYIQQGQSLSEAVSTTTARVNNELSDFCKLADIVTAPSISDELRVYVDGLKYWIRGYMDWVVHDTERYADKFIASDADDRCVSTLNPSLLNRSSSSATE</sequence>
<protein>
    <recommendedName>
        <fullName evidence="3">Sesquiterpene synthase MAC_05714</fullName>
        <ecNumber evidence="2">4.2.3.163</ecNumber>
        <ecNumber evidence="2">4.2.3.171</ecNumber>
    </recommendedName>
    <alternativeName>
        <fullName evidence="3">Bacterial terpene synthase-like protein MAC_05714</fullName>
        <shortName evidence="3">BTPSL</shortName>
    </alternativeName>
</protein>
<feature type="chain" id="PRO_0000451050" description="Sesquiterpene synthase MAC_05714">
    <location>
        <begin position="1"/>
        <end position="349"/>
    </location>
</feature>
<feature type="short sequence motif" description="DDXXXD motif" evidence="1">
    <location>
        <begin position="91"/>
        <end position="96"/>
    </location>
</feature>
<feature type="binding site" evidence="1">
    <location>
        <position position="91"/>
    </location>
    <ligand>
        <name>Mg(2+)</name>
        <dbReference type="ChEBI" id="CHEBI:18420"/>
        <label>1</label>
    </ligand>
</feature>
<feature type="binding site" evidence="1">
    <location>
        <position position="96"/>
    </location>
    <ligand>
        <name>Mg(2+)</name>
        <dbReference type="ChEBI" id="CHEBI:18420"/>
        <label>1</label>
    </ligand>
</feature>
<feature type="binding site" evidence="1">
    <location>
        <position position="96"/>
    </location>
    <ligand>
        <name>Mg(2+)</name>
        <dbReference type="ChEBI" id="CHEBI:18420"/>
        <label>2</label>
    </ligand>
</feature>
<feature type="binding site" evidence="1">
    <location>
        <position position="184"/>
    </location>
    <ligand>
        <name>substrate</name>
    </ligand>
</feature>
<feature type="binding site" evidence="1">
    <location>
        <position position="230"/>
    </location>
    <ligand>
        <name>Mg(2+)</name>
        <dbReference type="ChEBI" id="CHEBI:18420"/>
        <label>3</label>
    </ligand>
</feature>
<feature type="binding site" evidence="1">
    <location>
        <position position="234"/>
    </location>
    <ligand>
        <name>Mg(2+)</name>
        <dbReference type="ChEBI" id="CHEBI:18420"/>
        <label>3</label>
    </ligand>
</feature>
<feature type="binding site" evidence="1">
    <location>
        <position position="238"/>
    </location>
    <ligand>
        <name>Mg(2+)</name>
        <dbReference type="ChEBI" id="CHEBI:18420"/>
        <label>3</label>
    </ligand>
</feature>
<feature type="site" description="Plays a critical role in the stabilization of intermediate cation" evidence="1">
    <location>
        <position position="88"/>
    </location>
</feature>
<feature type="site" description="Plays a critical role for substrate recognition" evidence="1">
    <location>
        <position position="92"/>
    </location>
</feature>
<organism>
    <name type="scientific">Metarhizium acridum (strain CQMa 102)</name>
    <dbReference type="NCBI Taxonomy" id="655827"/>
    <lineage>
        <taxon>Eukaryota</taxon>
        <taxon>Fungi</taxon>
        <taxon>Dikarya</taxon>
        <taxon>Ascomycota</taxon>
        <taxon>Pezizomycotina</taxon>
        <taxon>Sordariomycetes</taxon>
        <taxon>Hypocreomycetidae</taxon>
        <taxon>Hypocreales</taxon>
        <taxon>Clavicipitaceae</taxon>
        <taxon>Metarhizium</taxon>
    </lineage>
</organism>
<gene>
    <name type="ORF">MAC_05714</name>
</gene>
<keyword id="KW-0456">Lyase</keyword>
<keyword id="KW-0460">Magnesium</keyword>
<keyword id="KW-0479">Metal-binding</keyword>
<keyword id="KW-1185">Reference proteome</keyword>
<comment type="function">
    <text evidence="2">Terpene synthase that catalyzes the conversion of (2E,6E)-farnesyl diphosphate (FPP) into sesquiterpenes which are important for fungi-environment interactions (PubMed:31239482). Produces a mixture consisting of 8 sesquiterpenes including corvol ethers A and B, as well as traces of epizonarene, gamma-cadinene, delta-cadinene, alpha-cadinene, alpha-cadinol, and an unidentified sesquiterpene (PubMed:31239482). Produces both corvol ether A and corvol ether B in similar concentrations (PubMed:31239482).</text>
</comment>
<comment type="catalytic activity">
    <reaction evidence="2">
        <text>(2E,6E)-farnesyl diphosphate + H2O = (+)-corvol ether B + diphosphate</text>
        <dbReference type="Rhea" id="RHEA:53644"/>
        <dbReference type="ChEBI" id="CHEBI:15377"/>
        <dbReference type="ChEBI" id="CHEBI:33019"/>
        <dbReference type="ChEBI" id="CHEBI:137536"/>
        <dbReference type="ChEBI" id="CHEBI:175763"/>
        <dbReference type="EC" id="4.2.3.163"/>
    </reaction>
    <physiologicalReaction direction="left-to-right" evidence="2">
        <dbReference type="Rhea" id="RHEA:53645"/>
    </physiologicalReaction>
</comment>
<comment type="catalytic activity">
    <reaction evidence="2">
        <text>(2E,6E)-farnesyl diphosphate + H2O = (+)-corvol ether A + diphosphate</text>
        <dbReference type="Rhea" id="RHEA:53648"/>
        <dbReference type="ChEBI" id="CHEBI:15377"/>
        <dbReference type="ChEBI" id="CHEBI:33019"/>
        <dbReference type="ChEBI" id="CHEBI:137535"/>
        <dbReference type="ChEBI" id="CHEBI:175763"/>
        <dbReference type="EC" id="4.2.3.171"/>
    </reaction>
    <physiologicalReaction direction="left-to-right" evidence="2">
        <dbReference type="Rhea" id="RHEA:53649"/>
    </physiologicalReaction>
</comment>
<comment type="cofactor">
    <cofactor evidence="1">
        <name>Mg(2+)</name>
        <dbReference type="ChEBI" id="CHEBI:18420"/>
    </cofactor>
    <text evidence="1">Binds 3 Mg(2+) ions per subunit.</text>
</comment>
<comment type="domain">
    <text evidence="1">The Asp-Asp-Xaa-Xaa-Xaa-Asp (DDXXXD) motif is important for the catalytic activity, presumably through binding to Mg(2+).</text>
</comment>
<comment type="similarity">
    <text evidence="4">Belongs to the terpene synthase family.</text>
</comment>
<proteinExistence type="evidence at protein level"/>
<accession>E9E766</accession>